<organism>
    <name type="scientific">Bean common mosaic necrosis virus (strain NL-3)</name>
    <name type="common">BCMNV</name>
    <name type="synonym">Bean common mosaic virus serotype A (strain NL-3)</name>
    <dbReference type="NCBI Taxonomy" id="500578"/>
    <lineage>
        <taxon>Viruses</taxon>
        <taxon>Riboviria</taxon>
        <taxon>Orthornavirae</taxon>
        <taxon>Pisuviricota</taxon>
        <taxon>Stelpaviricetes</taxon>
        <taxon>Patatavirales</taxon>
        <taxon>Potyviridae</taxon>
        <taxon>Potyvirus</taxon>
        <taxon>Potyvirus phaseoli</taxon>
        <taxon>Bean common mosaic necrosis virus</taxon>
    </lineage>
</organism>
<protein>
    <recommendedName>
        <fullName>Genome polyprotein</fullName>
    </recommendedName>
    <component>
        <recommendedName>
            <fullName>P1 protease</fullName>
            <ecNumber>3.4.21.-</ecNumber>
        </recommendedName>
        <alternativeName>
            <fullName>Leader protease P1</fullName>
        </alternativeName>
        <alternativeName>
            <fullName>N-terminal protein</fullName>
        </alternativeName>
        <alternativeName>
            <fullName>P1 proteinase</fullName>
        </alternativeName>
    </component>
    <component>
        <recommendedName>
            <fullName>Helper component proteinase</fullName>
            <shortName>HC-pro</shortName>
            <ecNumber evidence="2">3.4.22.45</ecNumber>
        </recommendedName>
    </component>
    <component>
        <recommendedName>
            <fullName>Protein P3</fullName>
        </recommendedName>
    </component>
    <component>
        <recommendedName>
            <fullName>6 kDa protein 1</fullName>
            <shortName>6K1</shortName>
        </recommendedName>
    </component>
    <component>
        <recommendedName>
            <fullName>Cytoplasmic inclusion protein</fullName>
            <shortName>CI</shortName>
            <ecNumber>3.6.4.-</ecNumber>
        </recommendedName>
    </component>
    <component>
        <recommendedName>
            <fullName>6 kDa protein 2</fullName>
            <shortName>6K2</shortName>
        </recommendedName>
    </component>
    <component>
        <recommendedName>
            <fullName>Viral genome-linked protein</fullName>
        </recommendedName>
        <alternativeName>
            <fullName>VPg</fullName>
        </alternativeName>
    </component>
    <component>
        <recommendedName>
            <fullName>Nuclear inclusion protein A</fullName>
            <shortName>NI-a</shortName>
            <shortName>NIa</shortName>
            <ecNumber>3.4.22.44</ecNumber>
        </recommendedName>
        <alternativeName>
            <fullName>49 kDa proteinase</fullName>
            <shortName>49 kDa-Pro</shortName>
        </alternativeName>
        <alternativeName>
            <fullName>NIa-pro</fullName>
        </alternativeName>
    </component>
    <component>
        <recommendedName>
            <fullName>Nuclear inclusion protein B</fullName>
            <shortName>NI-b</shortName>
            <shortName>NIb</shortName>
            <ecNumber>2.7.7.48</ecNumber>
        </recommendedName>
        <alternativeName>
            <fullName>RNA-directed RNA polymerase</fullName>
        </alternativeName>
    </component>
    <component>
        <recommendedName>
            <fullName>Capsid protein</fullName>
            <shortName>CP</shortName>
        </recommendedName>
        <alternativeName>
            <fullName>Coat protein</fullName>
        </alternativeName>
    </component>
</protein>
<feature type="chain" id="PRO_0000419991" description="Genome polyprotein">
    <location>
        <begin position="1"/>
        <end position="3066"/>
    </location>
</feature>
<feature type="chain" id="PRO_0000040223" description="P1 protease" evidence="9">
    <location>
        <begin position="1"/>
        <end position="317"/>
    </location>
</feature>
<feature type="chain" id="PRO_0000040224" description="Helper component proteinase" evidence="9">
    <location>
        <begin position="318"/>
        <end position="774"/>
    </location>
</feature>
<feature type="chain" id="PRO_0000040225" description="Protein P3" evidence="1">
    <location>
        <begin position="775"/>
        <end position="1121"/>
    </location>
</feature>
<feature type="chain" id="PRO_0000040226" description="6 kDa protein 1" evidence="1">
    <location>
        <begin position="1122"/>
        <end position="1173"/>
    </location>
</feature>
<feature type="chain" id="PRO_0000040227" description="Cytoplasmic inclusion protein" evidence="1">
    <location>
        <begin position="1174"/>
        <end position="1807"/>
    </location>
</feature>
<feature type="chain" id="PRO_0000040228" description="6 kDa protein 2" evidence="1">
    <location>
        <begin position="1808"/>
        <end position="1860"/>
    </location>
</feature>
<feature type="chain" id="PRO_0000040229" description="Viral genome-linked protein" evidence="1">
    <location>
        <begin position="1861"/>
        <end position="2045"/>
    </location>
</feature>
<feature type="chain" id="PRO_0000040230" description="Nuclear inclusion protein A" evidence="1">
    <location>
        <begin position="2046"/>
        <end position="2288"/>
    </location>
</feature>
<feature type="chain" id="PRO_0000040231" description="Nuclear inclusion protein B" evidence="1">
    <location>
        <begin position="2289"/>
        <end position="2805"/>
    </location>
</feature>
<feature type="chain" id="PRO_0000040232" description="Capsid protein" evidence="1">
    <location>
        <begin position="2806"/>
        <end position="3066"/>
    </location>
</feature>
<feature type="domain" description="Peptidase S30" evidence="15">
    <location>
        <begin position="176"/>
        <end position="317"/>
    </location>
</feature>
<feature type="domain" description="Peptidase C6" evidence="14">
    <location>
        <begin position="652"/>
        <end position="774"/>
    </location>
</feature>
<feature type="domain" description="Helicase ATP-binding" evidence="11">
    <location>
        <begin position="1245"/>
        <end position="1397"/>
    </location>
</feature>
<feature type="domain" description="Helicase C-terminal" evidence="12">
    <location>
        <begin position="1416"/>
        <end position="1575"/>
    </location>
</feature>
<feature type="domain" description="Peptidase C4" evidence="13">
    <location>
        <begin position="2046"/>
        <end position="2264"/>
    </location>
</feature>
<feature type="domain" description="RdRp catalytic" evidence="10">
    <location>
        <begin position="2530"/>
        <end position="2654"/>
    </location>
</feature>
<feature type="region of interest" description="Disordered" evidence="16">
    <location>
        <begin position="2797"/>
        <end position="2839"/>
    </location>
</feature>
<feature type="short sequence motif" description="Involved in interaction with stylet and aphid transmission" evidence="1">
    <location>
        <begin position="370"/>
        <end position="373"/>
    </location>
</feature>
<feature type="short sequence motif" description="Involved in virions binding and aphid transmission" evidence="1">
    <location>
        <begin position="626"/>
        <end position="628"/>
    </location>
</feature>
<feature type="short sequence motif" description="DECH box">
    <location>
        <begin position="1347"/>
        <end position="1350"/>
    </location>
</feature>
<feature type="short sequence motif" description="Nuclear localization signal" evidence="9">
    <location>
        <begin position="1900"/>
        <end position="1909"/>
    </location>
</feature>
<feature type="compositionally biased region" description="Basic and acidic residues" evidence="16">
    <location>
        <begin position="2807"/>
        <end position="2833"/>
    </location>
</feature>
<feature type="active site" description="For P1 proteinase activity" evidence="15">
    <location>
        <position position="230"/>
    </location>
</feature>
<feature type="active site" description="For P1 proteinase activity" evidence="15">
    <location>
        <position position="239"/>
    </location>
</feature>
<feature type="active site" description="For P1 proteinase activity" evidence="15">
    <location>
        <position position="271"/>
    </location>
</feature>
<feature type="active site" description="For helper component proteinase activity" evidence="14">
    <location>
        <position position="660"/>
    </location>
</feature>
<feature type="active site" description="For helper component proteinase activity" evidence="14">
    <location>
        <position position="733"/>
    </location>
</feature>
<feature type="active site" description="For nuclear inclusion protein A activity" evidence="13">
    <location>
        <position position="2091"/>
    </location>
</feature>
<feature type="active site" description="For nuclear inclusion protein A activity" evidence="13">
    <location>
        <position position="2126"/>
    </location>
</feature>
<feature type="active site" description="For nuclear inclusion protein A activity" evidence="13">
    <location>
        <position position="2196"/>
    </location>
</feature>
<feature type="binding site" evidence="11">
    <location>
        <begin position="1258"/>
        <end position="1265"/>
    </location>
    <ligand>
        <name>ATP</name>
        <dbReference type="ChEBI" id="CHEBI:30616"/>
    </ligand>
</feature>
<feature type="site" description="Cleavage; by P1 proteinase" evidence="15">
    <location>
        <begin position="317"/>
        <end position="318"/>
    </location>
</feature>
<feature type="site" description="Cleavage; by autolysis" evidence="14">
    <location>
        <begin position="774"/>
        <end position="775"/>
    </location>
</feature>
<feature type="site" description="Cleavage; by NIa-pro" evidence="6">
    <location>
        <begin position="1121"/>
        <end position="1122"/>
    </location>
</feature>
<feature type="site" description="Cleavage; by NIa-pro" evidence="6">
    <location>
        <begin position="1173"/>
        <end position="1174"/>
    </location>
</feature>
<feature type="site" description="Cleavage; by NIa-pro" evidence="6">
    <location>
        <begin position="1807"/>
        <end position="1808"/>
    </location>
</feature>
<feature type="site" description="Cleavage; by NIa-pro" evidence="6">
    <location>
        <begin position="1860"/>
        <end position="1861"/>
    </location>
</feature>
<feature type="site" description="Cleavage; by NIa-pro" evidence="6">
    <location>
        <begin position="2045"/>
        <end position="2046"/>
    </location>
</feature>
<feature type="site" description="Cleavage; by NIa-pro" evidence="6">
    <location>
        <begin position="2288"/>
        <end position="2289"/>
    </location>
</feature>
<feature type="site" description="Cleavage; by NIa-pro" evidence="6">
    <location>
        <begin position="2805"/>
        <end position="2806"/>
    </location>
</feature>
<feature type="modified residue" description="O-(5'-phospho-RNA)-tyrosine" evidence="3">
    <location>
        <position position="1924"/>
    </location>
</feature>
<feature type="modified residue" description="Phosphothreonine" evidence="5">
    <location>
        <position position="3048"/>
    </location>
</feature>
<feature type="sequence variant" description="In strain: Infectious clone Calhoun.">
    <original>T</original>
    <variation>TGLPQT</variation>
    <location>
        <position position="2029"/>
    </location>
</feature>
<feature type="sequence variant" description="In strain: Infectious clone Calhoun.">
    <original>R</original>
    <variation>A</variation>
    <location>
        <position position="3022"/>
    </location>
</feature>
<keyword id="KW-0067">ATP-binding</keyword>
<keyword id="KW-0167">Capsid protein</keyword>
<keyword id="KW-0191">Covalent protein-RNA linkage</keyword>
<keyword id="KW-1139">Helical capsid protein</keyword>
<keyword id="KW-0347">Helicase</keyword>
<keyword id="KW-1036">Host cytoplasmic vesicle</keyword>
<keyword id="KW-1048">Host nucleus</keyword>
<keyword id="KW-0945">Host-virus interaction</keyword>
<keyword id="KW-0378">Hydrolase</keyword>
<keyword id="KW-1090">Inhibition of host innate immune response by virus</keyword>
<keyword id="KW-0547">Nucleotide-binding</keyword>
<keyword id="KW-0548">Nucleotidyltransferase</keyword>
<keyword id="KW-0597">Phosphoprotein</keyword>
<keyword id="KW-0645">Protease</keyword>
<keyword id="KW-0688">Ribosomal frameshifting</keyword>
<keyword id="KW-0696">RNA-directed RNA polymerase</keyword>
<keyword id="KW-0720">Serine protease</keyword>
<keyword id="KW-0941">Suppressor of RNA silencing</keyword>
<keyword id="KW-0788">Thiol protease</keyword>
<keyword id="KW-0808">Transferase</keyword>
<keyword id="KW-0899">Viral immunoevasion</keyword>
<keyword id="KW-0693">Viral RNA replication</keyword>
<keyword id="KW-0946">Virion</keyword>
<sequence>MATIMFGSIAAEIPVIKEAIMIAMPKSKHTLHVVQVEAKHMATEIRSERGKLYVAKRFADNAIKAYDSQLKAFDELLKKNSDLQKRLFIGQNSPIKQKKGGACFVRSLSFKQAEERHAKYLKLQEEEHQFLSGAYGDKAYVGSVQGTLDRKVAEKVSFKSPYYKRTCKAVRQVKVLKKAVGSGKVLDQVLEIVAETGVPVTFVGKGANKTLRAQYVRRYGLVIPKIFLCHESGRKVHREMSYWHHKETLQYLCKHGKYGALNENALCKGDSGLLFDQRTAFVKRVTYLPHFIVRGRQEGQLVCATEYLDNVYTIEHYTHKPEEQFFKGWKQVFDKMAPHTFEHDCTIDYNNEQCGELAATICQTLFPVRKLSCNKCRHRIKDLSWEEFKQFILAHLGCCAKLWEEQKNLPGLEKIHSFVVQATSENMIFETSMEIVRLTQNYTSTHMLQIQDINKALMKGSSATQEDLKKASEQLLAMTRWWKNHMTLTNEDALKTFRNKRSSKALINPSLLCDNQLDRNGNFVWGERGRHSKRFFENFFEEVVPSEGYKKYVIRNNPNGFRKLAIDSLIVPMDLARARIALQGESIKREDLTLACVSKQDGNFVYPCCCVTQDDGRPFYSELKSPTKRHLVVGTSGDPKYIDLPATDSDRMYIAKEGYCYLNIFLAMLVNVNEDEAKDFTKMVRDVVVPKLGTWPSMMDVATAVYIMTVFHPETRSAELPRILVDHASQTMHVIDSFGSLSVGYHVLKAGTVNQLIQFASNDLEGEMKHYRVGGDAEQRMRCERALISSIFKPKKMMQILENDPYTLVLGLVSPTVLIHMFRMKHFEKGVELWINKDQSVVKIFLLLEHLTRKIAMNDVLLEQLEMISQQAGRLHEIICDCPKNIHSYRAVKDFLEVKMEAALTNKELANNGFFDINESLGHVSEKIYAKALEKEWRALSWLEKSSVTWQLKKFSKVTEEHLTKKAAEGRKESSRKFVSACFMNAQTHLGNARITISNKVNEVTNLGVRRIVEMCLRLIHRCYSDMIFLVNISIIFSLFVQMCATLRNTLSIIHRDRTTLARVQAESNERSIMQMYDLMTKAGNGPPKMEDFFKHIEMVRPDLLPTAKYMVQDSEAVDTQAKTQTQLQLEKIVAFMALLTMCIDSERSDAVFKILQKLKSVFGTMGEDVRPQSLDDILDLDEAKQLTVDFDLSTSKESTSTSFDVTFEDWWNRQLQQNRVIPHYRTSGEFLEFTRETAAKVANTITLSTSTEFLIRGAVGSGKSTGLPHHLSKKGKVLLLEPTRPLAENVSKQLGRDPFFHAVTLRMRGLNRFGSSNITVMTSGFAFHYYVNNPHQLSDFDFIIIDECHVLDSATIAFNCALKEFEFPGKLLKVSATPPGRECEFTTQHPVKLKVEEHLSFQQFAQAQGTGSNADMVQYGHNLLVYVASYNEVDQMSRHLLDRQFHVTKVDGRTMQMGNIEIETHGTEGKPHFIVATNIIENGVTLDVDCVIDFGLKVVAQLDSDNRCVRYEKKAVSFGERIQRLGRVGRHKAGFALRIGHTEKSLEEIPEFIATEAAFLSFAYGLPVTTQGVSTNILSRCTVKQARNALNFELTPFFTTNFIRYDGSIHPEVHKLLCKFKLRESEMLLSKLAIPHQYTSQWITVKDYNRIGIQVNCDEKVKIPFYVHGIPDKLFEMLWNTVCKYKCDAGFGRISSVNATKISYTLSTDPSALPRTIAILDHLISEEIMKKNHFDTISSSLTGHSFSLAGIADGIRKRYLKDYTQQNIAILQQARAQLLEFNSNTVDLNNLQNYEDLGVLNTVRLQGKAEVCEFLGLKGKWDGKKFFNDVVVAIFTLIGGGWMLWDYFRHYMQEPVSTQGRKRMMQKLKFRDAFDRKVGREVYADDYTMEHTFGEAYTKKGKQKGSTHTKGMGKKSRGFIHMYGVEPENYSTLRFVDPLTGHTMDESPRVDIRIVQDEFGEIRRQKINEGELDKQAVVARPGLQAYFLGKGTEEALKVDLTPHRPTLLCMNSNAIAGFPEREDELRQTVPMSAVPKPNEVVELESKSTYKGLRDYSSVSTLICRLVNSSDGHNETIYGIGYGSYIITNGHLFRRNNGTLTVKTWHGDFIIPNTTQLKIHFIEGKDAILIRMPRDFPPFAQRSCFRSPKKEERVCMVGTNFQEKSLRSTVSESSIIVPEGKGSFWVHWITTQDGDCGLPMVSVNDGYIVGIHGLTSNETSRNFFVPFIDEFKNKYLDKLEDLTWNKHWLWQPDRIAWGSLNLVDDQPKSEFKISKLVTDLFGSEVSVQSKKDRWVLEAVEGNLVACGQAESALVTKHVVKGKCCHFAQYLSLHPDAQAFFKPLMSAYQPSKLNKEAFKKDFFKYNKPVMLNEVNFEAFEKAVEGVKIMMIEFGFNECVYVTDPDDIYDSLNMKAAVGAQYKGKKQDYFQDMDSFDKERLLFLSCERLFYGQKGIWNGSLKAELRPLEKVQANKTRTFTAAPIDTLLGAKVCVDDFNNQFYSFNLICPWTVGMTKFYGGWDKLMRALPDGWVYCHADGSQFDSSLTPLLLNSVLSIRSFFMEDWWVGKEMLENLYAEIVYTPILTPDGTIFKKFRGNNSGQPSTVVDNTLMVVISMYYSCIKEGWTYDDIQERLVFFANGDDIILAVQKEDVWLYNTLSNSFKELGLNYDFSEQTTKREELWFMSHQAMLIDDIYIPKLEQERIVSILEWDRSKELMHRTEAICAAMIEAWGHTELLTEIRKFYLWLMGKEEFKELALNGKAPYIAETALRKLYTDKDAKMEEMQEYLKQLEFDSDDEVYESVSTQSSKKEEEKDAGADEREKDKGKGPADKDVGAGSKGKVVPRLQKITKKMNLPMVGGRMILNLDHLIEYKPQQTDLYNTRATKAQFERWYEAVKTEYELNDQQMGVVMNGFMVWCIDNGTSPDVNGVWVMMDGDEQIEYPLKPMVENAKPTLRQVMHHFSDAAEAYIEMRNSEGFYMPRYGLLRNLRDKSLARYAFDFYEVNSKTSDRAREAVAQMKAARLANVNTRLFGLDGNVATTSENTERHTARDVNQNMHHLLGMTSGQ</sequence>
<comment type="function">
    <molecule>Helper component proteinase</molecule>
    <text evidence="2">Required for aphid transmission and also has proteolytic activity. Only cleaves a Gly-Gly dipeptide at its own C-terminus. Interacts with virions and aphid stylets. Acts as a suppressor of RNA-mediated gene silencing, also known as post-transcriptional gene silencing (PTGS), a mechanism of plant viral defense that limits the accumulation of viral RNAs. May have RNA-binding activity.</text>
</comment>
<comment type="function">
    <molecule>Cytoplasmic inclusion protein</molecule>
    <text>Has helicase activity. It may be involved in replication.</text>
</comment>
<comment type="function">
    <molecule>6 kDa protein 1</molecule>
    <text evidence="4 8">Indispensable for virus replication (By similarity). Reduces the abundance of host transcripts related to jasmonic acid biosynthesis therefore altering the host defenses (By similarity). In order to increase its own stability, decreases host protein degradation pathways (By similarity).</text>
</comment>
<comment type="function">
    <molecule>6 kDa protein 2</molecule>
    <text evidence="3">Indispensable for virus replication.</text>
</comment>
<comment type="function">
    <molecule>Viral genome-linked protein</molecule>
    <text evidence="6">Mediates the cap-independent, EIF4E-dependent translation of viral genomic RNAs (By similarity). Binds to the cap-binding site of host EIF4E and thus interferes with the host EIF4E-dependent mRNA export and translation (By similarity). VPg-RNA directly binds EIF4E and is a template for transcription (By similarity). Also forms trimeric complexes with EIF4E-EIF4G, which are templates for translation (By similarity).</text>
</comment>
<comment type="function">
    <molecule>Nuclear inclusion protein A</molecule>
    <text evidence="2">Has RNA-binding and proteolytic activities.</text>
</comment>
<comment type="function">
    <molecule>Nuclear inclusion protein B</molecule>
    <text>An RNA-dependent RNA polymerase that plays an essential role in the virus replication.</text>
</comment>
<comment type="function">
    <molecule>Capsid protein</molecule>
    <text evidence="2">Involved in aphid transmission, cell-to-cell and systemis movement, encapsidation of the viral RNA and in the regulation of viral RNA amplification.</text>
</comment>
<comment type="catalytic activity">
    <molecule>Nuclear inclusion protein B</molecule>
    <reaction evidence="10">
        <text>RNA(n) + a ribonucleoside 5'-triphosphate = RNA(n+1) + diphosphate</text>
        <dbReference type="Rhea" id="RHEA:21248"/>
        <dbReference type="Rhea" id="RHEA-COMP:14527"/>
        <dbReference type="Rhea" id="RHEA-COMP:17342"/>
        <dbReference type="ChEBI" id="CHEBI:33019"/>
        <dbReference type="ChEBI" id="CHEBI:61557"/>
        <dbReference type="ChEBI" id="CHEBI:140395"/>
        <dbReference type="EC" id="2.7.7.48"/>
    </reaction>
</comment>
<comment type="catalytic activity">
    <molecule>Nuclear inclusion protein A</molecule>
    <reaction evidence="2">
        <text>Hydrolyzes glutaminyl bonds, and activity is further restricted by preferences for the amino acids in P6 - P1' that vary with the species of potyvirus, e.g. Glu-Xaa-Xaa-Tyr-Xaa-Gln-|-(Ser or Gly) for the enzyme from tobacco etch virus. The natural substrate is the viral polyprotein, but other proteins and oligopeptides containing the appropriate consensus sequence are also cleaved.</text>
        <dbReference type="EC" id="3.4.22.44"/>
    </reaction>
</comment>
<comment type="catalytic activity">
    <molecule>Helper component proteinase</molecule>
    <reaction evidence="2">
        <text>Hydrolyzes a Gly-|-Gly bond at its own C-terminus, commonly in the sequence -Tyr-Xaa-Val-Gly-|-Gly, in the processing of the potyviral polyprotein.</text>
        <dbReference type="EC" id="3.4.22.45"/>
    </reaction>
</comment>
<comment type="subunit">
    <molecule>Viral genome-linked protein</molecule>
    <text evidence="6">Interacts with host eIF4E protein (via cap-binding region); this interaction mediates the translation of the VPg-viral RNA conjugates (By similarity). Part of a complex that comprises VPg, RNA, host EIF4E and EIF4G; this interaction mediates the translation of the VPg-viral RNA conjugates (By similarity).</text>
</comment>
<comment type="subcellular location">
    <molecule>6 kDa protein 1</molecule>
    <subcellularLocation>
        <location>Host cytoplasmic vesicle</location>
    </subcellularLocation>
    <text evidence="4">Probably colocalizes with 6K2-induced vesicles associated with host chloroplasts.</text>
</comment>
<comment type="subcellular location">
    <molecule>6 kDa protein 2</molecule>
    <subcellularLocation>
        <location evidence="3">Host cytoplasmic vesicle</location>
    </subcellularLocation>
    <text evidence="3">6K-induced vesicles associate with host chloroplasts.</text>
</comment>
<comment type="subcellular location">
    <molecule>Viral genome-linked protein</molecule>
    <subcellularLocation>
        <location evidence="7">Host nucleus</location>
    </subcellularLocation>
    <text evidence="7">Binds to host plant eIF4E proteins in the host nucleus.</text>
</comment>
<comment type="subcellular location">
    <molecule>Capsid protein</molecule>
    <subcellularLocation>
        <location evidence="17">Virion</location>
    </subcellularLocation>
</comment>
<comment type="alternative products">
    <event type="ribosomal frameshifting"/>
    <isoform>
        <id>Q65399-1</id>
        <name>Genome polyprotein</name>
        <sequence type="displayed"/>
    </isoform>
    <isoform>
        <id>P0CJ94-1</id>
        <name>P3N-PIPO polyprotein</name>
        <sequence type="external"/>
    </isoform>
</comment>
<comment type="domain">
    <molecule>Helper component proteinase</molecule>
    <text>The N-terminus is involved in interaction with stylets. The central part is involved in interaction with virions and the C-terminus is involved in cell-to cell movement of the virus.</text>
</comment>
<comment type="PTM">
    <molecule>Viral genome-linked protein</molecule>
    <text evidence="3">VPg is uridylylated by the polymerase and is covalently attached to the 5'-end of the genomic RNA. This uridylylated form acts as a nucleotide-peptide primer for the polymerase (By similarity).</text>
</comment>
<comment type="PTM">
    <molecule>Genome polyprotein</molecule>
    <text evidence="1">Genome polyprotein of potyviruses undergoes post-translational proteolytic processing by the main proteinase NIa-pro resulting in the production of at least ten individual proteins. The P1 proteinase and the HC-pro cleave only their respective C-termini autocatalytically. 6K1 is essential for proper proteolytic separation of P3 from CI (By similarity).</text>
</comment>
<comment type="miscellaneous">
    <molecule>Isoform Genome polyprotein</molecule>
    <text>Produced by conventional translation.</text>
</comment>
<comment type="similarity">
    <text evidence="17">Belongs to the potyviridae genome polyprotein family.</text>
</comment>
<name>POLG_BCMNN</name>
<accession>Q65399</accession>
<accession>Q7TL25</accession>
<reference key="1">
    <citation type="journal article" date="1995" name="Virus Res.">
        <title>The complete nucleotide sequence and genome organization of bean common mosaic virus (NL3 strain).</title>
        <authorList>
            <person name="Fang G.W."/>
            <person name="Allison R.F."/>
            <person name="Zambolim E.M."/>
            <person name="Maxwell D.P."/>
            <person name="Gilbertson R.L."/>
        </authorList>
    </citation>
    <scope>NUCLEOTIDE SEQUENCE [GENOMIC RNA]</scope>
    <source>
        <strain>Isolate Michigan</strain>
    </source>
</reference>
<reference key="2">
    <citation type="submission" date="2003-04" db="EMBL/GenBank/DDBJ databases">
        <title>Construction of a BCMNV-full length infectious clone.</title>
        <authorList>
            <person name="Calhoun C.L."/>
            <person name="Allison R.F."/>
        </authorList>
    </citation>
    <scope>NUCLEOTIDE SEQUENCE [MRNA]</scope>
    <source>
        <strain>Infectious clone Calhoun</strain>
    </source>
</reference>
<reference key="3">
    <citation type="journal article" date="2001" name="Virus Res.">
        <title>Potyvirus proteins: a wealth of functions.</title>
        <authorList>
            <person name="Urcuqui-Inchima S."/>
            <person name="Haenni A.L."/>
            <person name="Bernardi F."/>
        </authorList>
    </citation>
    <scope>REVIEW</scope>
</reference>
<evidence type="ECO:0000250" key="1"/>
<evidence type="ECO:0000250" key="2">
    <source>
        <dbReference type="UniProtKB" id="P04517"/>
    </source>
</evidence>
<evidence type="ECO:0000250" key="3">
    <source>
        <dbReference type="UniProtKB" id="P09814"/>
    </source>
</evidence>
<evidence type="ECO:0000250" key="4">
    <source>
        <dbReference type="UniProtKB" id="P13529"/>
    </source>
</evidence>
<evidence type="ECO:0000250" key="5">
    <source>
        <dbReference type="UniProtKB" id="P17767"/>
    </source>
</evidence>
<evidence type="ECO:0000250" key="6">
    <source>
        <dbReference type="UniProtKB" id="P18247"/>
    </source>
</evidence>
<evidence type="ECO:0000250" key="7">
    <source>
        <dbReference type="UniProtKB" id="P21231"/>
    </source>
</evidence>
<evidence type="ECO:0000250" key="8">
    <source>
        <dbReference type="UniProtKB" id="P89509"/>
    </source>
</evidence>
<evidence type="ECO:0000255" key="9"/>
<evidence type="ECO:0000255" key="10">
    <source>
        <dbReference type="PROSITE-ProRule" id="PRU00539"/>
    </source>
</evidence>
<evidence type="ECO:0000255" key="11">
    <source>
        <dbReference type="PROSITE-ProRule" id="PRU00541"/>
    </source>
</evidence>
<evidence type="ECO:0000255" key="12">
    <source>
        <dbReference type="PROSITE-ProRule" id="PRU00542"/>
    </source>
</evidence>
<evidence type="ECO:0000255" key="13">
    <source>
        <dbReference type="PROSITE-ProRule" id="PRU00766"/>
    </source>
</evidence>
<evidence type="ECO:0000255" key="14">
    <source>
        <dbReference type="PROSITE-ProRule" id="PRU01080"/>
    </source>
</evidence>
<evidence type="ECO:0000255" key="15">
    <source>
        <dbReference type="PROSITE-ProRule" id="PRU01219"/>
    </source>
</evidence>
<evidence type="ECO:0000256" key="16">
    <source>
        <dbReference type="SAM" id="MobiDB-lite"/>
    </source>
</evidence>
<evidence type="ECO:0000305" key="17"/>
<organismHost>
    <name type="scientific">Phaseolus vulgaris</name>
    <name type="common">Kidney bean</name>
    <name type="synonym">French bean</name>
    <dbReference type="NCBI Taxonomy" id="3885"/>
</organismHost>
<proteinExistence type="evidence at transcript level"/>
<dbReference type="EC" id="3.4.21.-"/>
<dbReference type="EC" id="3.4.22.45" evidence="2"/>
<dbReference type="EC" id="3.6.4.-"/>
<dbReference type="EC" id="3.4.22.44"/>
<dbReference type="EC" id="2.7.7.48"/>
<dbReference type="EMBL" id="U19287">
    <property type="protein sequence ID" value="AAB02170.1"/>
    <property type="molecule type" value="Genomic_RNA"/>
</dbReference>
<dbReference type="EMBL" id="AY282577">
    <property type="protein sequence ID" value="AAP38183.1"/>
    <property type="molecule type" value="mRNA"/>
</dbReference>
<dbReference type="RefSeq" id="NP_660175.1">
    <property type="nucleotide sequence ID" value="NC_004047.1"/>
</dbReference>
<dbReference type="MEROPS" id="C06.001"/>
<dbReference type="MEROPS" id="S30.001"/>
<dbReference type="GeneID" id="949209"/>
<dbReference type="KEGG" id="vg:949209"/>
<dbReference type="BioCyc" id="MetaCyc:MONOMER-7715"/>
<dbReference type="Proteomes" id="UP000007452">
    <property type="component" value="Segment"/>
</dbReference>
<dbReference type="GO" id="GO:0019029">
    <property type="term" value="C:helical viral capsid"/>
    <property type="evidence" value="ECO:0007669"/>
    <property type="project" value="UniProtKB-KW"/>
</dbReference>
<dbReference type="GO" id="GO:0044161">
    <property type="term" value="C:host cell cytoplasmic vesicle"/>
    <property type="evidence" value="ECO:0007669"/>
    <property type="project" value="UniProtKB-SubCell"/>
</dbReference>
<dbReference type="GO" id="GO:0042025">
    <property type="term" value="C:host cell nucleus"/>
    <property type="evidence" value="ECO:0007669"/>
    <property type="project" value="UniProtKB-SubCell"/>
</dbReference>
<dbReference type="GO" id="GO:0005524">
    <property type="term" value="F:ATP binding"/>
    <property type="evidence" value="ECO:0007669"/>
    <property type="project" value="UniProtKB-KW"/>
</dbReference>
<dbReference type="GO" id="GO:0004197">
    <property type="term" value="F:cysteine-type endopeptidase activity"/>
    <property type="evidence" value="ECO:0007669"/>
    <property type="project" value="InterPro"/>
</dbReference>
<dbReference type="GO" id="GO:0004386">
    <property type="term" value="F:helicase activity"/>
    <property type="evidence" value="ECO:0007669"/>
    <property type="project" value="UniProtKB-KW"/>
</dbReference>
<dbReference type="GO" id="GO:0016818">
    <property type="term" value="F:hydrolase activity, acting on acid anhydrides, in phosphorus-containing anhydrides"/>
    <property type="evidence" value="ECO:0007669"/>
    <property type="project" value="InterPro"/>
</dbReference>
<dbReference type="GO" id="GO:0003723">
    <property type="term" value="F:RNA binding"/>
    <property type="evidence" value="ECO:0007669"/>
    <property type="project" value="InterPro"/>
</dbReference>
<dbReference type="GO" id="GO:0003968">
    <property type="term" value="F:RNA-directed RNA polymerase activity"/>
    <property type="evidence" value="ECO:0007669"/>
    <property type="project" value="UniProtKB-KW"/>
</dbReference>
<dbReference type="GO" id="GO:0008236">
    <property type="term" value="F:serine-type peptidase activity"/>
    <property type="evidence" value="ECO:0007669"/>
    <property type="project" value="UniProtKB-KW"/>
</dbReference>
<dbReference type="GO" id="GO:0005198">
    <property type="term" value="F:structural molecule activity"/>
    <property type="evidence" value="ECO:0007669"/>
    <property type="project" value="InterPro"/>
</dbReference>
<dbReference type="GO" id="GO:0006351">
    <property type="term" value="P:DNA-templated transcription"/>
    <property type="evidence" value="ECO:0007669"/>
    <property type="project" value="InterPro"/>
</dbReference>
<dbReference type="GO" id="GO:0006508">
    <property type="term" value="P:proteolysis"/>
    <property type="evidence" value="ECO:0007669"/>
    <property type="project" value="UniProtKB-KW"/>
</dbReference>
<dbReference type="GO" id="GO:0052170">
    <property type="term" value="P:symbiont-mediated suppression of host innate immune response"/>
    <property type="evidence" value="ECO:0007669"/>
    <property type="project" value="UniProtKB-KW"/>
</dbReference>
<dbReference type="GO" id="GO:0039694">
    <property type="term" value="P:viral RNA genome replication"/>
    <property type="evidence" value="ECO:0007669"/>
    <property type="project" value="InterPro"/>
</dbReference>
<dbReference type="GO" id="GO:0075523">
    <property type="term" value="P:viral translational frameshifting"/>
    <property type="evidence" value="ECO:0007669"/>
    <property type="project" value="UniProtKB-KW"/>
</dbReference>
<dbReference type="CDD" id="cd23175">
    <property type="entry name" value="ps-ssRNAv_Potyviridae_RdRp"/>
    <property type="match status" value="1"/>
</dbReference>
<dbReference type="Gene3D" id="3.30.70.270">
    <property type="match status" value="1"/>
</dbReference>
<dbReference type="Gene3D" id="3.90.70.150">
    <property type="entry name" value="Helper component proteinase"/>
    <property type="match status" value="1"/>
</dbReference>
<dbReference type="Gene3D" id="3.40.50.300">
    <property type="entry name" value="P-loop containing nucleotide triphosphate hydrolases"/>
    <property type="match status" value="2"/>
</dbReference>
<dbReference type="Gene3D" id="2.40.10.10">
    <property type="entry name" value="Trypsin-like serine proteases"/>
    <property type="match status" value="2"/>
</dbReference>
<dbReference type="InterPro" id="IPR011545">
    <property type="entry name" value="DEAD/DEAH_box_helicase_dom"/>
</dbReference>
<dbReference type="InterPro" id="IPR043502">
    <property type="entry name" value="DNA/RNA_pol_sf"/>
</dbReference>
<dbReference type="InterPro" id="IPR001456">
    <property type="entry name" value="HC-pro"/>
</dbReference>
<dbReference type="InterPro" id="IPR031159">
    <property type="entry name" value="HC_PRO_CPD_dom"/>
</dbReference>
<dbReference type="InterPro" id="IPR042308">
    <property type="entry name" value="HC_PRO_CPD_sf"/>
</dbReference>
<dbReference type="InterPro" id="IPR014001">
    <property type="entry name" value="Helicase_ATP-bd"/>
</dbReference>
<dbReference type="InterPro" id="IPR001650">
    <property type="entry name" value="Helicase_C-like"/>
</dbReference>
<dbReference type="InterPro" id="IPR027417">
    <property type="entry name" value="P-loop_NTPase"/>
</dbReference>
<dbReference type="InterPro" id="IPR002540">
    <property type="entry name" value="Pept_S30_P1_potyvir"/>
</dbReference>
<dbReference type="InterPro" id="IPR009003">
    <property type="entry name" value="Peptidase_S1_PA"/>
</dbReference>
<dbReference type="InterPro" id="IPR043504">
    <property type="entry name" value="Peptidase_S1_PA_chymotrypsin"/>
</dbReference>
<dbReference type="InterPro" id="IPR001592">
    <property type="entry name" value="Poty_coat"/>
</dbReference>
<dbReference type="InterPro" id="IPR001730">
    <property type="entry name" value="Potyv_NIa-pro_dom"/>
</dbReference>
<dbReference type="InterPro" id="IPR039560">
    <property type="entry name" value="Potyvirid-P3"/>
</dbReference>
<dbReference type="InterPro" id="IPR013648">
    <property type="entry name" value="PP_Potyviridae"/>
</dbReference>
<dbReference type="InterPro" id="IPR043128">
    <property type="entry name" value="Rev_trsase/Diguanyl_cyclase"/>
</dbReference>
<dbReference type="InterPro" id="IPR001205">
    <property type="entry name" value="RNA-dir_pol_C"/>
</dbReference>
<dbReference type="InterPro" id="IPR007094">
    <property type="entry name" value="RNA-dir_pol_PSvirus"/>
</dbReference>
<dbReference type="PANTHER" id="PTHR43519">
    <property type="entry name" value="ATP-DEPENDENT RNA HELICASE HRPB"/>
    <property type="match status" value="1"/>
</dbReference>
<dbReference type="PANTHER" id="PTHR43519:SF1">
    <property type="entry name" value="ATP-DEPENDENT RNA HELICASE HRPB"/>
    <property type="match status" value="1"/>
</dbReference>
<dbReference type="Pfam" id="PF00270">
    <property type="entry name" value="DEAD"/>
    <property type="match status" value="1"/>
</dbReference>
<dbReference type="Pfam" id="PF00271">
    <property type="entry name" value="Helicase_C"/>
    <property type="match status" value="1"/>
</dbReference>
<dbReference type="Pfam" id="PF00863">
    <property type="entry name" value="Peptidase_C4"/>
    <property type="match status" value="1"/>
</dbReference>
<dbReference type="Pfam" id="PF00851">
    <property type="entry name" value="Peptidase_C6"/>
    <property type="match status" value="1"/>
</dbReference>
<dbReference type="Pfam" id="PF01577">
    <property type="entry name" value="Peptidase_S30"/>
    <property type="match status" value="1"/>
</dbReference>
<dbReference type="Pfam" id="PF00767">
    <property type="entry name" value="Poty_coat"/>
    <property type="match status" value="1"/>
</dbReference>
<dbReference type="Pfam" id="PF08440">
    <property type="entry name" value="Poty_PP"/>
    <property type="match status" value="1"/>
</dbReference>
<dbReference type="Pfam" id="PF13608">
    <property type="entry name" value="Potyvirid-P3"/>
    <property type="match status" value="1"/>
</dbReference>
<dbReference type="Pfam" id="PF00680">
    <property type="entry name" value="RdRP_1"/>
    <property type="match status" value="1"/>
</dbReference>
<dbReference type="PRINTS" id="PR00966">
    <property type="entry name" value="NIAPOTYPTASE"/>
</dbReference>
<dbReference type="SMART" id="SM00487">
    <property type="entry name" value="DEXDc"/>
    <property type="match status" value="1"/>
</dbReference>
<dbReference type="SMART" id="SM00490">
    <property type="entry name" value="HELICc"/>
    <property type="match status" value="1"/>
</dbReference>
<dbReference type="SUPFAM" id="SSF56672">
    <property type="entry name" value="DNA/RNA polymerases"/>
    <property type="match status" value="1"/>
</dbReference>
<dbReference type="SUPFAM" id="SSF52540">
    <property type="entry name" value="P-loop containing nucleoside triphosphate hydrolases"/>
    <property type="match status" value="2"/>
</dbReference>
<dbReference type="SUPFAM" id="SSF50494">
    <property type="entry name" value="Trypsin-like serine proteases"/>
    <property type="match status" value="1"/>
</dbReference>
<dbReference type="PROSITE" id="PS51744">
    <property type="entry name" value="HC_PRO_CPD"/>
    <property type="match status" value="1"/>
</dbReference>
<dbReference type="PROSITE" id="PS51192">
    <property type="entry name" value="HELICASE_ATP_BIND_1"/>
    <property type="match status" value="1"/>
</dbReference>
<dbReference type="PROSITE" id="PS51194">
    <property type="entry name" value="HELICASE_CTER"/>
    <property type="match status" value="1"/>
</dbReference>
<dbReference type="PROSITE" id="PS51436">
    <property type="entry name" value="POTYVIRUS_NIA_PRO"/>
    <property type="match status" value="1"/>
</dbReference>
<dbReference type="PROSITE" id="PS51871">
    <property type="entry name" value="PV_P1_PRO"/>
    <property type="match status" value="1"/>
</dbReference>
<dbReference type="PROSITE" id="PS50507">
    <property type="entry name" value="RDRP_SSRNA_POS"/>
    <property type="match status" value="1"/>
</dbReference>